<reference key="1">
    <citation type="journal article" date="2004" name="Biochim. Biophys. Acta">
        <title>Cytoplasmic glycosylation of protein-hydroxyproline and its relationship to other glycosylation pathways.</title>
        <authorList>
            <person name="West C.M."/>
            <person name="Van Der Wel H."/>
            <person name="Sassi S."/>
            <person name="Gaucher E.A."/>
        </authorList>
    </citation>
    <scope>NUCLEOTIDE SEQUENCE [GENOMIC DNA]</scope>
</reference>
<reference key="2">
    <citation type="journal article" date="2002" name="Nature">
        <title>Sequence and analysis of chromosome 2 of Dictyostelium discoideum.</title>
        <authorList>
            <person name="Gloeckner G."/>
            <person name="Eichinger L."/>
            <person name="Szafranski K."/>
            <person name="Pachebat J.A."/>
            <person name="Bankier A.T."/>
            <person name="Dear P.H."/>
            <person name="Lehmann R."/>
            <person name="Baumgart C."/>
            <person name="Parra G."/>
            <person name="Abril J.F."/>
            <person name="Guigo R."/>
            <person name="Kumpf K."/>
            <person name="Tunggal B."/>
            <person name="Cox E.C."/>
            <person name="Quail M.A."/>
            <person name="Platzer M."/>
            <person name="Rosenthal A."/>
            <person name="Noegel A.A."/>
        </authorList>
    </citation>
    <scope>NUCLEOTIDE SEQUENCE [LARGE SCALE GENOMIC DNA]</scope>
    <source>
        <strain>AX4</strain>
    </source>
</reference>
<reference key="3">
    <citation type="journal article" date="2005" name="Nature">
        <title>The genome of the social amoeba Dictyostelium discoideum.</title>
        <authorList>
            <person name="Eichinger L."/>
            <person name="Pachebat J.A."/>
            <person name="Gloeckner G."/>
            <person name="Rajandream M.A."/>
            <person name="Sucgang R."/>
            <person name="Berriman M."/>
            <person name="Song J."/>
            <person name="Olsen R."/>
            <person name="Szafranski K."/>
            <person name="Xu Q."/>
            <person name="Tunggal B."/>
            <person name="Kummerfeld S."/>
            <person name="Madera M."/>
            <person name="Konfortov B.A."/>
            <person name="Rivero F."/>
            <person name="Bankier A.T."/>
            <person name="Lehmann R."/>
            <person name="Hamlin N."/>
            <person name="Davies R."/>
            <person name="Gaudet P."/>
            <person name="Fey P."/>
            <person name="Pilcher K."/>
            <person name="Chen G."/>
            <person name="Saunders D."/>
            <person name="Sodergren E.J."/>
            <person name="Davis P."/>
            <person name="Kerhornou A."/>
            <person name="Nie X."/>
            <person name="Hall N."/>
            <person name="Anjard C."/>
            <person name="Hemphill L."/>
            <person name="Bason N."/>
            <person name="Farbrother P."/>
            <person name="Desany B."/>
            <person name="Just E."/>
            <person name="Morio T."/>
            <person name="Rost R."/>
            <person name="Churcher C.M."/>
            <person name="Cooper J."/>
            <person name="Haydock S."/>
            <person name="van Driessche N."/>
            <person name="Cronin A."/>
            <person name="Goodhead I."/>
            <person name="Muzny D.M."/>
            <person name="Mourier T."/>
            <person name="Pain A."/>
            <person name="Lu M."/>
            <person name="Harper D."/>
            <person name="Lindsay R."/>
            <person name="Hauser H."/>
            <person name="James K.D."/>
            <person name="Quiles M."/>
            <person name="Madan Babu M."/>
            <person name="Saito T."/>
            <person name="Buchrieser C."/>
            <person name="Wardroper A."/>
            <person name="Felder M."/>
            <person name="Thangavelu M."/>
            <person name="Johnson D."/>
            <person name="Knights A."/>
            <person name="Loulseged H."/>
            <person name="Mungall K.L."/>
            <person name="Oliver K."/>
            <person name="Price C."/>
            <person name="Quail M.A."/>
            <person name="Urushihara H."/>
            <person name="Hernandez J."/>
            <person name="Rabbinowitsch E."/>
            <person name="Steffen D."/>
            <person name="Sanders M."/>
            <person name="Ma J."/>
            <person name="Kohara Y."/>
            <person name="Sharp S."/>
            <person name="Simmonds M.N."/>
            <person name="Spiegler S."/>
            <person name="Tivey A."/>
            <person name="Sugano S."/>
            <person name="White B."/>
            <person name="Walker D."/>
            <person name="Woodward J.R."/>
            <person name="Winckler T."/>
            <person name="Tanaka Y."/>
            <person name="Shaulsky G."/>
            <person name="Schleicher M."/>
            <person name="Weinstock G.M."/>
            <person name="Rosenthal A."/>
            <person name="Cox E.C."/>
            <person name="Chisholm R.L."/>
            <person name="Gibbs R.A."/>
            <person name="Loomis W.F."/>
            <person name="Platzer M."/>
            <person name="Kay R.R."/>
            <person name="Williams J.G."/>
            <person name="Dear P.H."/>
            <person name="Noegel A.A."/>
            <person name="Barrell B.G."/>
            <person name="Kuspa A."/>
        </authorList>
    </citation>
    <scope>NUCLEOTIDE SEQUENCE [LARGE SCALE GENOMIC DNA]</scope>
    <source>
        <strain>AX4</strain>
    </source>
</reference>
<reference key="4">
    <citation type="journal article" date="2001" name="Glycobiology">
        <title>Analysis of Skp1 glycosylation and nuclear enrichment in Dictyostelium.</title>
        <authorList>
            <person name="Sassi S."/>
            <person name="Sweetinburgh M."/>
            <person name="Erogul J."/>
            <person name="Zhang P."/>
            <person name="Teng-Umnuay P."/>
            <person name="West C.M."/>
        </authorList>
    </citation>
    <scope>FUNCTION</scope>
    <scope>ACTIVITY REGULATION</scope>
</reference>
<reference key="5">
    <citation type="journal article" date="2005" name="J. Biol. Chem.">
        <title>The Skp1 prolyl hydroxylase from Dictyostelium is related to the hypoxia-inducible factor-alpha class of animal prolyl 4-hydroxylases.</title>
        <authorList>
            <person name="van der Wel H."/>
            <person name="Ercan A."/>
            <person name="West C.M."/>
        </authorList>
    </citation>
    <scope>CATALYTIC ACTIVITY</scope>
    <scope>COFACTOR</scope>
</reference>
<accession>Q86KR9</accession>
<accession>Q54Z57</accession>
<name>P4HA_DICDI</name>
<organism>
    <name type="scientific">Dictyostelium discoideum</name>
    <name type="common">Social amoeba</name>
    <dbReference type="NCBI Taxonomy" id="44689"/>
    <lineage>
        <taxon>Eukaryota</taxon>
        <taxon>Amoebozoa</taxon>
        <taxon>Evosea</taxon>
        <taxon>Eumycetozoa</taxon>
        <taxon>Dictyostelia</taxon>
        <taxon>Dictyosteliales</taxon>
        <taxon>Dictyosteliaceae</taxon>
        <taxon>Dictyostelium</taxon>
    </lineage>
</organism>
<comment type="function">
    <text evidence="3">Catalyzes the post-translational formation of 4-hydroxyproline. Probably hydroxylates skp1 on Pro-143.</text>
</comment>
<comment type="catalytic activity">
    <reaction evidence="4">
        <text>L-prolyl-[Skp1 protein] + 2-oxoglutarate + O2 = trans-4-hydroxy-L-prolyl-[Skp1 protein] + succinate + CO2</text>
        <dbReference type="Rhea" id="RHEA:48936"/>
        <dbReference type="Rhea" id="RHEA-COMP:12265"/>
        <dbReference type="Rhea" id="RHEA-COMP:12266"/>
        <dbReference type="ChEBI" id="CHEBI:15379"/>
        <dbReference type="ChEBI" id="CHEBI:16526"/>
        <dbReference type="ChEBI" id="CHEBI:16810"/>
        <dbReference type="ChEBI" id="CHEBI:30031"/>
        <dbReference type="ChEBI" id="CHEBI:50342"/>
        <dbReference type="ChEBI" id="CHEBI:61965"/>
    </reaction>
</comment>
<comment type="cofactor">
    <cofactor evidence="2">
        <name>Fe(2+)</name>
        <dbReference type="ChEBI" id="CHEBI:29033"/>
    </cofactor>
    <text evidence="2">Binds 1 Fe(2+) ion per subunit.</text>
</comment>
<comment type="cofactor">
    <cofactor evidence="4">
        <name>L-ascorbate</name>
        <dbReference type="ChEBI" id="CHEBI:38290"/>
    </cofactor>
</comment>
<comment type="activity regulation">
    <text evidence="3">Inhibited by the prolyl-hydroxylase inhibitors alpha,alpha'-dipyridyl and ethyl 3,4-dihydroxybenzoate.</text>
</comment>
<comment type="subunit">
    <text evidence="1">Heterotetramer of two alpha-1 chains and two beta chains (the beta chain is the multi-functional PDI).</text>
</comment>
<comment type="subcellular location">
    <subcellularLocation>
        <location evidence="1">Cytoplasm</location>
    </subcellularLocation>
</comment>
<comment type="similarity">
    <text evidence="5">Belongs to the P4HA family.</text>
</comment>
<dbReference type="EC" id="1.14.11.-"/>
<dbReference type="EMBL" id="AY768817">
    <property type="protein sequence ID" value="AAV37458.1"/>
    <property type="molecule type" value="Genomic_DNA"/>
</dbReference>
<dbReference type="EMBL" id="AAFI02000022">
    <property type="protein sequence ID" value="EAL68553.1"/>
    <property type="molecule type" value="Genomic_DNA"/>
</dbReference>
<dbReference type="RefSeq" id="XP_642496.1">
    <property type="nucleotide sequence ID" value="XM_637404.1"/>
</dbReference>
<dbReference type="PDB" id="6T8M">
    <property type="method" value="X-ray"/>
    <property type="resolution" value="2.02 A"/>
    <property type="chains" value="A/B/C=60-284"/>
</dbReference>
<dbReference type="PDBsum" id="6T8M"/>
<dbReference type="SMR" id="Q86KR9"/>
<dbReference type="BioGRID" id="1246210">
    <property type="interactions" value="1"/>
</dbReference>
<dbReference type="FunCoup" id="Q86KR9">
    <property type="interactions" value="91"/>
</dbReference>
<dbReference type="STRING" id="44689.Q86KR9"/>
<dbReference type="PaxDb" id="44689-DDB0231040"/>
<dbReference type="EnsemblProtists" id="EAL68553">
    <property type="protein sequence ID" value="EAL68553"/>
    <property type="gene ID" value="DDB_G0277759"/>
</dbReference>
<dbReference type="GeneID" id="8621207"/>
<dbReference type="KEGG" id="ddi:DDB_G0277759"/>
<dbReference type="dictyBase" id="DDB_G0277759">
    <property type="gene designation" value="phyA"/>
</dbReference>
<dbReference type="VEuPathDB" id="AmoebaDB:DDB_G0277759"/>
<dbReference type="eggNOG" id="KOG3710">
    <property type="taxonomic scope" value="Eukaryota"/>
</dbReference>
<dbReference type="HOGENOM" id="CLU_981514_0_0_1"/>
<dbReference type="InParanoid" id="Q86KR9"/>
<dbReference type="OMA" id="YPPGAFY"/>
<dbReference type="PhylomeDB" id="Q86KR9"/>
<dbReference type="BRENDA" id="1.14.11.2">
    <property type="organism ID" value="1939"/>
</dbReference>
<dbReference type="PRO" id="PR:Q86KR9"/>
<dbReference type="Proteomes" id="UP000002195">
    <property type="component" value="Chromosome 2"/>
</dbReference>
<dbReference type="GO" id="GO:0005737">
    <property type="term" value="C:cytoplasm"/>
    <property type="evidence" value="ECO:0000314"/>
    <property type="project" value="dictyBase"/>
</dbReference>
<dbReference type="GO" id="GO:0008198">
    <property type="term" value="F:ferrous iron binding"/>
    <property type="evidence" value="ECO:0000318"/>
    <property type="project" value="GO_Central"/>
</dbReference>
<dbReference type="GO" id="GO:0031418">
    <property type="term" value="F:L-ascorbic acid binding"/>
    <property type="evidence" value="ECO:0007669"/>
    <property type="project" value="UniProtKB-KW"/>
</dbReference>
<dbReference type="GO" id="GO:0031545">
    <property type="term" value="F:peptidyl-proline 4-dioxygenase activity"/>
    <property type="evidence" value="ECO:0000314"/>
    <property type="project" value="dictyBase"/>
</dbReference>
<dbReference type="GO" id="GO:0031543">
    <property type="term" value="F:peptidyl-proline dioxygenase activity"/>
    <property type="evidence" value="ECO:0000318"/>
    <property type="project" value="GO_Central"/>
</dbReference>
<dbReference type="GO" id="GO:0071456">
    <property type="term" value="P:cellular response to hypoxia"/>
    <property type="evidence" value="ECO:0000318"/>
    <property type="project" value="GO_Central"/>
</dbReference>
<dbReference type="GO" id="GO:0031154">
    <property type="term" value="P:culmination involved in sorocarp development"/>
    <property type="evidence" value="ECO:0000315"/>
    <property type="project" value="dictyBase"/>
</dbReference>
<dbReference type="GO" id="GO:0072592">
    <property type="term" value="P:oxygen metabolic process"/>
    <property type="evidence" value="ECO:0000315"/>
    <property type="project" value="dictyBase"/>
</dbReference>
<dbReference type="GO" id="GO:0010265">
    <property type="term" value="P:SCF complex assembly"/>
    <property type="evidence" value="ECO:0000314"/>
    <property type="project" value="dictyBase"/>
</dbReference>
<dbReference type="Gene3D" id="2.60.120.620">
    <property type="entry name" value="q2cbj1_9rhob like domain"/>
    <property type="match status" value="1"/>
</dbReference>
<dbReference type="InterPro" id="IPR051559">
    <property type="entry name" value="HIF_prolyl_hydroxylases"/>
</dbReference>
<dbReference type="InterPro" id="IPR005123">
    <property type="entry name" value="Oxoglu/Fe-dep_dioxygenase_dom"/>
</dbReference>
<dbReference type="InterPro" id="IPR006620">
    <property type="entry name" value="Pro_4_hyd_alph"/>
</dbReference>
<dbReference type="InterPro" id="IPR044862">
    <property type="entry name" value="Pro_4_hyd_alph_FE2OG_OXY"/>
</dbReference>
<dbReference type="PANTHER" id="PTHR12907">
    <property type="entry name" value="EGL NINE HOMOLOG-RELATED"/>
    <property type="match status" value="1"/>
</dbReference>
<dbReference type="PANTHER" id="PTHR12907:SF26">
    <property type="entry name" value="HIF PROLYL HYDROXYLASE, ISOFORM C"/>
    <property type="match status" value="1"/>
</dbReference>
<dbReference type="Pfam" id="PF13640">
    <property type="entry name" value="2OG-FeII_Oxy_3"/>
    <property type="match status" value="1"/>
</dbReference>
<dbReference type="SMART" id="SM00702">
    <property type="entry name" value="P4Hc"/>
    <property type="match status" value="1"/>
</dbReference>
<dbReference type="PROSITE" id="PS51471">
    <property type="entry name" value="FE2OG_OXY"/>
    <property type="match status" value="1"/>
</dbReference>
<gene>
    <name type="primary">phyA</name>
    <name type="synonym">p4h1</name>
    <name type="ORF">DDB_G0277759</name>
</gene>
<keyword id="KW-0002">3D-structure</keyword>
<keyword id="KW-0963">Cytoplasm</keyword>
<keyword id="KW-0223">Dioxygenase</keyword>
<keyword id="KW-0408">Iron</keyword>
<keyword id="KW-0479">Metal-binding</keyword>
<keyword id="KW-0560">Oxidoreductase</keyword>
<keyword id="KW-1185">Reference proteome</keyword>
<keyword id="KW-0847">Vitamin C</keyword>
<protein>
    <recommendedName>
        <fullName>Prolyl 4-hydroxylase subunit alpha</fullName>
        <shortName>Prolyl 4-hydrolase</shortName>
        <ecNumber>1.14.11.-</ecNumber>
    </recommendedName>
</protein>
<feature type="chain" id="PRO_0000327577" description="Prolyl 4-hydroxylase subunit alpha">
    <location>
        <begin position="1"/>
        <end position="284"/>
    </location>
</feature>
<feature type="domain" description="Fe2OG dioxygenase" evidence="2">
    <location>
        <begin position="169"/>
        <end position="284"/>
    </location>
</feature>
<feature type="binding site" evidence="2">
    <location>
        <position position="191"/>
    </location>
    <ligand>
        <name>Fe cation</name>
        <dbReference type="ChEBI" id="CHEBI:24875"/>
    </ligand>
</feature>
<feature type="binding site" evidence="2">
    <location>
        <position position="193"/>
    </location>
    <ligand>
        <name>Fe cation</name>
        <dbReference type="ChEBI" id="CHEBI:24875"/>
    </ligand>
</feature>
<feature type="binding site" evidence="2">
    <location>
        <position position="266"/>
    </location>
    <ligand>
        <name>Fe cation</name>
        <dbReference type="ChEBI" id="CHEBI:24875"/>
    </ligand>
</feature>
<feature type="binding site" evidence="2">
    <location>
        <position position="276"/>
    </location>
    <ligand>
        <name>2-oxoglutarate</name>
        <dbReference type="ChEBI" id="CHEBI:16810"/>
    </ligand>
</feature>
<feature type="helix" evidence="6">
    <location>
        <begin position="64"/>
        <end position="72"/>
    </location>
</feature>
<feature type="strand" evidence="6">
    <location>
        <begin position="74"/>
        <end position="78"/>
    </location>
</feature>
<feature type="strand" evidence="6">
    <location>
        <begin position="80"/>
        <end position="82"/>
    </location>
</feature>
<feature type="helix" evidence="6">
    <location>
        <begin position="85"/>
        <end position="100"/>
    </location>
</feature>
<feature type="turn" evidence="6">
    <location>
        <begin position="119"/>
        <end position="121"/>
    </location>
</feature>
<feature type="strand" evidence="6">
    <location>
        <begin position="125"/>
        <end position="129"/>
    </location>
</feature>
<feature type="helix" evidence="6">
    <location>
        <begin position="147"/>
        <end position="166"/>
    </location>
</feature>
<feature type="strand" evidence="6">
    <location>
        <begin position="175"/>
        <end position="182"/>
    </location>
</feature>
<feature type="strand" evidence="6">
    <location>
        <begin position="188"/>
        <end position="191"/>
    </location>
</feature>
<feature type="strand" evidence="6">
    <location>
        <begin position="207"/>
        <end position="212"/>
    </location>
</feature>
<feature type="strand" evidence="6">
    <location>
        <begin position="225"/>
        <end position="228"/>
    </location>
</feature>
<feature type="strand" evidence="6">
    <location>
        <begin position="246"/>
        <end position="249"/>
    </location>
</feature>
<feature type="strand" evidence="6">
    <location>
        <begin position="255"/>
        <end position="260"/>
    </location>
</feature>
<feature type="turn" evidence="6">
    <location>
        <begin position="261"/>
        <end position="263"/>
    </location>
</feature>
<feature type="strand" evidence="6">
    <location>
        <begin position="266"/>
        <end position="268"/>
    </location>
</feature>
<feature type="strand" evidence="6">
    <location>
        <begin position="271"/>
        <end position="274"/>
    </location>
</feature>
<feature type="strand" evidence="6">
    <location>
        <begin position="276"/>
        <end position="283"/>
    </location>
</feature>
<proteinExistence type="evidence at protein level"/>
<evidence type="ECO:0000250" key="1"/>
<evidence type="ECO:0000255" key="2">
    <source>
        <dbReference type="PROSITE-ProRule" id="PRU00805"/>
    </source>
</evidence>
<evidence type="ECO:0000269" key="3">
    <source>
    </source>
</evidence>
<evidence type="ECO:0000269" key="4">
    <source>
    </source>
</evidence>
<evidence type="ECO:0000305" key="5"/>
<evidence type="ECO:0007829" key="6">
    <source>
        <dbReference type="PDB" id="6T8M"/>
    </source>
</evidence>
<sequence length="284" mass="33348">MDISNLPPHIRQQILGLISKPQQNNDESSSSNNKNNLINNEKVSNVLIDLTSNLKIENFKIFNKESLNQLEKKGYLIIDNFLNDLNKINLIYDESYNQFKENKLIEAGMNKGTDKWKDKSIRGDYIQWIHRDSNSRIQDKDLSSTIRNINYLLDKLDLIKNEFDNVIPNFNSIKTQTQLAVYLNGGRYIKHRDSFYSSESLTISRRITMIYYVNKDWKKGDGGELRLYTNNPNNTNQKELKQTEEFIDIEPIADRLLIFLSPFLEHEVLQCNFEPRIAITTWIY</sequence>